<organism>
    <name type="scientific">Mycobacterium tuberculosis (strain CDC 1551 / Oshkosh)</name>
    <dbReference type="NCBI Taxonomy" id="83331"/>
    <lineage>
        <taxon>Bacteria</taxon>
        <taxon>Bacillati</taxon>
        <taxon>Actinomycetota</taxon>
        <taxon>Actinomycetes</taxon>
        <taxon>Mycobacteriales</taxon>
        <taxon>Mycobacteriaceae</taxon>
        <taxon>Mycobacterium</taxon>
        <taxon>Mycobacterium tuberculosis complex</taxon>
    </lineage>
</organism>
<dbReference type="EMBL" id="AE000516">
    <property type="protein sequence ID" value="AAK46579.1"/>
    <property type="molecule type" value="Genomic_DNA"/>
</dbReference>
<dbReference type="PIR" id="H70777">
    <property type="entry name" value="H70777"/>
</dbReference>
<dbReference type="RefSeq" id="WP_003901355.1">
    <property type="nucleotide sequence ID" value="NZ_KK341227.1"/>
</dbReference>
<dbReference type="KEGG" id="mtc:MT2295"/>
<dbReference type="PATRIC" id="fig|83331.31.peg.2472"/>
<dbReference type="HOGENOM" id="CLU_054212_1_2_11"/>
<dbReference type="UniPathway" id="UPA00148"/>
<dbReference type="Proteomes" id="UP000001020">
    <property type="component" value="Chromosome"/>
</dbReference>
<dbReference type="GO" id="GO:0005886">
    <property type="term" value="C:plasma membrane"/>
    <property type="evidence" value="ECO:0007669"/>
    <property type="project" value="UniProtKB-SubCell"/>
</dbReference>
<dbReference type="GO" id="GO:0015420">
    <property type="term" value="F:ABC-type vitamin B12 transporter activity"/>
    <property type="evidence" value="ECO:0007669"/>
    <property type="project" value="UniProtKB-UniRule"/>
</dbReference>
<dbReference type="GO" id="GO:0048472">
    <property type="term" value="F:threonine-phosphate decarboxylase activity"/>
    <property type="evidence" value="ECO:0007669"/>
    <property type="project" value="InterPro"/>
</dbReference>
<dbReference type="GO" id="GO:0009236">
    <property type="term" value="P:cobalamin biosynthetic process"/>
    <property type="evidence" value="ECO:0007669"/>
    <property type="project" value="UniProtKB-UniRule"/>
</dbReference>
<dbReference type="HAMAP" id="MF_00024">
    <property type="entry name" value="CobD_CbiB"/>
    <property type="match status" value="1"/>
</dbReference>
<dbReference type="InterPro" id="IPR004485">
    <property type="entry name" value="Cobalamin_biosynth_CobD/CbiB"/>
</dbReference>
<dbReference type="NCBIfam" id="TIGR00380">
    <property type="entry name" value="cobal_cbiB"/>
    <property type="match status" value="1"/>
</dbReference>
<dbReference type="NCBIfam" id="NF002276">
    <property type="entry name" value="PRK01209.1-4"/>
    <property type="match status" value="1"/>
</dbReference>
<dbReference type="PANTHER" id="PTHR34308">
    <property type="entry name" value="COBALAMIN BIOSYNTHESIS PROTEIN CBIB"/>
    <property type="match status" value="1"/>
</dbReference>
<dbReference type="PANTHER" id="PTHR34308:SF1">
    <property type="entry name" value="COBALAMIN BIOSYNTHESIS PROTEIN CBIB"/>
    <property type="match status" value="1"/>
</dbReference>
<dbReference type="Pfam" id="PF03186">
    <property type="entry name" value="CobD_Cbib"/>
    <property type="match status" value="1"/>
</dbReference>
<sequence>MFASTWQTRAVGVLIGCLLDVVFGDPKRGHPVALFGRAAAKLEQITYRDGRVAGAVHVGLLVGAVGLLGAALQRLPGRCWPVAATATATWAALGGTSLARTGRQISDLLERDDVEAARRLLPSLCGRDPAQLGGPGLTRAALESVAENTADAQVVPLLWAASSGVPAVLGYRAINTLDSMIGYRSPRYLRFGWAAARLDDWANYVGARATAVLVVICAPVVGGSPRGAVRAWRRDAARHPSPNAGVVEAAFAGALDVRLGGPTRYHHELQIRPTLGDGRSPKVADLRRAVVLSRVVQAGAAVLAVMLVYRRRP</sequence>
<proteinExistence type="inferred from homology"/>
<gene>
    <name type="primary">cobD</name>
    <name type="ordered locus">MT2295</name>
</gene>
<feature type="chain" id="PRO_0000426992" description="Cobalamin biosynthesis protein CobD">
    <location>
        <begin position="1"/>
        <end position="313"/>
    </location>
</feature>
<feature type="transmembrane region" description="Helical" evidence="2">
    <location>
        <begin position="52"/>
        <end position="72"/>
    </location>
</feature>
<feature type="transmembrane region" description="Helical" evidence="2">
    <location>
        <begin position="79"/>
        <end position="99"/>
    </location>
</feature>
<feature type="transmembrane region" description="Helical" evidence="2">
    <location>
        <begin position="154"/>
        <end position="174"/>
    </location>
</feature>
<feature type="transmembrane region" description="Helical" evidence="2">
    <location>
        <begin position="204"/>
        <end position="224"/>
    </location>
</feature>
<feature type="transmembrane region" description="Helical" evidence="2">
    <location>
        <begin position="289"/>
        <end position="309"/>
    </location>
</feature>
<keyword id="KW-1003">Cell membrane</keyword>
<keyword id="KW-0169">Cobalamin biosynthesis</keyword>
<keyword id="KW-0472">Membrane</keyword>
<keyword id="KW-1185">Reference proteome</keyword>
<keyword id="KW-0812">Transmembrane</keyword>
<keyword id="KW-1133">Transmembrane helix</keyword>
<evidence type="ECO:0000250" key="1"/>
<evidence type="ECO:0000255" key="2"/>
<evidence type="ECO:0000305" key="3"/>
<reference key="1">
    <citation type="journal article" date="2002" name="J. Bacteriol.">
        <title>Whole-genome comparison of Mycobacterium tuberculosis clinical and laboratory strains.</title>
        <authorList>
            <person name="Fleischmann R.D."/>
            <person name="Alland D."/>
            <person name="Eisen J.A."/>
            <person name="Carpenter L."/>
            <person name="White O."/>
            <person name="Peterson J.D."/>
            <person name="DeBoy R.T."/>
            <person name="Dodson R.J."/>
            <person name="Gwinn M.L."/>
            <person name="Haft D.H."/>
            <person name="Hickey E.K."/>
            <person name="Kolonay J.F."/>
            <person name="Nelson W.C."/>
            <person name="Umayam L.A."/>
            <person name="Ermolaeva M.D."/>
            <person name="Salzberg S.L."/>
            <person name="Delcher A."/>
            <person name="Utterback T.R."/>
            <person name="Weidman J.F."/>
            <person name="Khouri H.M."/>
            <person name="Gill J."/>
            <person name="Mikula A."/>
            <person name="Bishai W."/>
            <person name="Jacobs W.R. Jr."/>
            <person name="Venter J.C."/>
            <person name="Fraser C.M."/>
        </authorList>
    </citation>
    <scope>NUCLEOTIDE SEQUENCE [LARGE SCALE GENOMIC DNA]</scope>
    <source>
        <strain>CDC 1551 / Oshkosh</strain>
    </source>
</reference>
<protein>
    <recommendedName>
        <fullName>Cobalamin biosynthesis protein CobD</fullName>
    </recommendedName>
</protein>
<comment type="function">
    <text evidence="1">Converts cobyric acid to cobinamide by the addition of aminopropanol on the F carboxylic group.</text>
</comment>
<comment type="pathway">
    <text>Cofactor biosynthesis; adenosylcobalamin biosynthesis.</text>
</comment>
<comment type="subcellular location">
    <subcellularLocation>
        <location evidence="3">Cell membrane</location>
        <topology evidence="3">Multi-pass membrane protein</topology>
    </subcellularLocation>
</comment>
<comment type="similarity">
    <text evidence="3">Belongs to the CobD/CbiB family.</text>
</comment>
<name>COBD_MYCTO</name>
<accession>P9WP92</accession>
<accession>L0T982</accession>
<accession>Q10518</accession>